<reference key="1">
    <citation type="submission" date="2007-03" db="EMBL/GenBank/DDBJ databases">
        <title>Complete sequence of chromosome 1 of Burkholderia vietnamiensis G4.</title>
        <authorList>
            <consortium name="US DOE Joint Genome Institute"/>
            <person name="Copeland A."/>
            <person name="Lucas S."/>
            <person name="Lapidus A."/>
            <person name="Barry K."/>
            <person name="Detter J.C."/>
            <person name="Glavina del Rio T."/>
            <person name="Hammon N."/>
            <person name="Israni S."/>
            <person name="Dalin E."/>
            <person name="Tice H."/>
            <person name="Pitluck S."/>
            <person name="Chain P."/>
            <person name="Malfatti S."/>
            <person name="Shin M."/>
            <person name="Vergez L."/>
            <person name="Schmutz J."/>
            <person name="Larimer F."/>
            <person name="Land M."/>
            <person name="Hauser L."/>
            <person name="Kyrpides N."/>
            <person name="Tiedje J."/>
            <person name="Richardson P."/>
        </authorList>
    </citation>
    <scope>NUCLEOTIDE SEQUENCE [LARGE SCALE GENOMIC DNA]</scope>
    <source>
        <strain>G4 / LMG 22486</strain>
    </source>
</reference>
<proteinExistence type="inferred from homology"/>
<feature type="chain" id="PRO_1000077764" description="UvrABC system protein C">
    <location>
        <begin position="1"/>
        <end position="683"/>
    </location>
</feature>
<feature type="domain" description="GIY-YIG" evidence="1">
    <location>
        <begin position="22"/>
        <end position="100"/>
    </location>
</feature>
<feature type="domain" description="UVR" evidence="1">
    <location>
        <begin position="209"/>
        <end position="244"/>
    </location>
</feature>
<evidence type="ECO:0000255" key="1">
    <source>
        <dbReference type="HAMAP-Rule" id="MF_00203"/>
    </source>
</evidence>
<gene>
    <name evidence="1" type="primary">uvrC</name>
    <name type="ordered locus">Bcep1808_1062</name>
</gene>
<name>UVRC_BURVG</name>
<dbReference type="EMBL" id="CP000614">
    <property type="protein sequence ID" value="ABO54073.1"/>
    <property type="molecule type" value="Genomic_DNA"/>
</dbReference>
<dbReference type="SMR" id="A4JCS0"/>
<dbReference type="KEGG" id="bvi:Bcep1808_1062"/>
<dbReference type="eggNOG" id="COG0322">
    <property type="taxonomic scope" value="Bacteria"/>
</dbReference>
<dbReference type="HOGENOM" id="CLU_014841_3_0_4"/>
<dbReference type="Proteomes" id="UP000002287">
    <property type="component" value="Chromosome 1"/>
</dbReference>
<dbReference type="GO" id="GO:0005737">
    <property type="term" value="C:cytoplasm"/>
    <property type="evidence" value="ECO:0007669"/>
    <property type="project" value="UniProtKB-SubCell"/>
</dbReference>
<dbReference type="GO" id="GO:0009380">
    <property type="term" value="C:excinuclease repair complex"/>
    <property type="evidence" value="ECO:0007669"/>
    <property type="project" value="InterPro"/>
</dbReference>
<dbReference type="GO" id="GO:0003677">
    <property type="term" value="F:DNA binding"/>
    <property type="evidence" value="ECO:0007669"/>
    <property type="project" value="UniProtKB-UniRule"/>
</dbReference>
<dbReference type="GO" id="GO:0009381">
    <property type="term" value="F:excinuclease ABC activity"/>
    <property type="evidence" value="ECO:0007669"/>
    <property type="project" value="UniProtKB-UniRule"/>
</dbReference>
<dbReference type="GO" id="GO:0006289">
    <property type="term" value="P:nucleotide-excision repair"/>
    <property type="evidence" value="ECO:0007669"/>
    <property type="project" value="UniProtKB-UniRule"/>
</dbReference>
<dbReference type="GO" id="GO:0009432">
    <property type="term" value="P:SOS response"/>
    <property type="evidence" value="ECO:0007669"/>
    <property type="project" value="UniProtKB-UniRule"/>
</dbReference>
<dbReference type="CDD" id="cd10434">
    <property type="entry name" value="GIY-YIG_UvrC_Cho"/>
    <property type="match status" value="1"/>
</dbReference>
<dbReference type="FunFam" id="3.30.420.340:FF:000001">
    <property type="entry name" value="UvrABC system protein C"/>
    <property type="match status" value="1"/>
</dbReference>
<dbReference type="FunFam" id="3.40.1440.10:FF:000001">
    <property type="entry name" value="UvrABC system protein C"/>
    <property type="match status" value="1"/>
</dbReference>
<dbReference type="Gene3D" id="1.10.150.20">
    <property type="entry name" value="5' to 3' exonuclease, C-terminal subdomain"/>
    <property type="match status" value="1"/>
</dbReference>
<dbReference type="Gene3D" id="3.40.1440.10">
    <property type="entry name" value="GIY-YIG endonuclease"/>
    <property type="match status" value="1"/>
</dbReference>
<dbReference type="Gene3D" id="4.10.860.10">
    <property type="entry name" value="UVR domain"/>
    <property type="match status" value="1"/>
</dbReference>
<dbReference type="Gene3D" id="3.30.420.340">
    <property type="entry name" value="UvrC, RNAse H endonuclease domain"/>
    <property type="match status" value="1"/>
</dbReference>
<dbReference type="HAMAP" id="MF_00203">
    <property type="entry name" value="UvrC"/>
    <property type="match status" value="1"/>
</dbReference>
<dbReference type="InterPro" id="IPR000305">
    <property type="entry name" value="GIY-YIG_endonuc"/>
</dbReference>
<dbReference type="InterPro" id="IPR035901">
    <property type="entry name" value="GIY-YIG_endonuc_sf"/>
</dbReference>
<dbReference type="InterPro" id="IPR047296">
    <property type="entry name" value="GIY-YIG_UvrC_Cho"/>
</dbReference>
<dbReference type="InterPro" id="IPR003583">
    <property type="entry name" value="Hlx-hairpin-Hlx_DNA-bd_motif"/>
</dbReference>
<dbReference type="InterPro" id="IPR010994">
    <property type="entry name" value="RuvA_2-like"/>
</dbReference>
<dbReference type="InterPro" id="IPR001943">
    <property type="entry name" value="UVR_dom"/>
</dbReference>
<dbReference type="InterPro" id="IPR036876">
    <property type="entry name" value="UVR_dom_sf"/>
</dbReference>
<dbReference type="InterPro" id="IPR050066">
    <property type="entry name" value="UvrABC_protein_C"/>
</dbReference>
<dbReference type="InterPro" id="IPR004791">
    <property type="entry name" value="UvrC"/>
</dbReference>
<dbReference type="InterPro" id="IPR001162">
    <property type="entry name" value="UvrC_RNase_H_dom"/>
</dbReference>
<dbReference type="InterPro" id="IPR038476">
    <property type="entry name" value="UvrC_RNase_H_dom_sf"/>
</dbReference>
<dbReference type="NCBIfam" id="NF001824">
    <property type="entry name" value="PRK00558.1-5"/>
    <property type="match status" value="1"/>
</dbReference>
<dbReference type="NCBIfam" id="TIGR00194">
    <property type="entry name" value="uvrC"/>
    <property type="match status" value="1"/>
</dbReference>
<dbReference type="PANTHER" id="PTHR30562:SF1">
    <property type="entry name" value="UVRABC SYSTEM PROTEIN C"/>
    <property type="match status" value="1"/>
</dbReference>
<dbReference type="PANTHER" id="PTHR30562">
    <property type="entry name" value="UVRC/OXIDOREDUCTASE"/>
    <property type="match status" value="1"/>
</dbReference>
<dbReference type="Pfam" id="PF01541">
    <property type="entry name" value="GIY-YIG"/>
    <property type="match status" value="1"/>
</dbReference>
<dbReference type="Pfam" id="PF14520">
    <property type="entry name" value="HHH_5"/>
    <property type="match status" value="1"/>
</dbReference>
<dbReference type="Pfam" id="PF02151">
    <property type="entry name" value="UVR"/>
    <property type="match status" value="1"/>
</dbReference>
<dbReference type="Pfam" id="PF22920">
    <property type="entry name" value="UvrC_RNaseH"/>
    <property type="match status" value="2"/>
</dbReference>
<dbReference type="Pfam" id="PF08459">
    <property type="entry name" value="UvrC_RNaseH_dom"/>
    <property type="match status" value="1"/>
</dbReference>
<dbReference type="SMART" id="SM00465">
    <property type="entry name" value="GIYc"/>
    <property type="match status" value="1"/>
</dbReference>
<dbReference type="SMART" id="SM00278">
    <property type="entry name" value="HhH1"/>
    <property type="match status" value="2"/>
</dbReference>
<dbReference type="SUPFAM" id="SSF46600">
    <property type="entry name" value="C-terminal UvrC-binding domain of UvrB"/>
    <property type="match status" value="1"/>
</dbReference>
<dbReference type="SUPFAM" id="SSF82771">
    <property type="entry name" value="GIY-YIG endonuclease"/>
    <property type="match status" value="1"/>
</dbReference>
<dbReference type="SUPFAM" id="SSF47781">
    <property type="entry name" value="RuvA domain 2-like"/>
    <property type="match status" value="1"/>
</dbReference>
<dbReference type="PROSITE" id="PS50164">
    <property type="entry name" value="GIY_YIG"/>
    <property type="match status" value="1"/>
</dbReference>
<dbReference type="PROSITE" id="PS50151">
    <property type="entry name" value="UVR"/>
    <property type="match status" value="1"/>
</dbReference>
<dbReference type="PROSITE" id="PS50165">
    <property type="entry name" value="UVRC"/>
    <property type="match status" value="1"/>
</dbReference>
<keyword id="KW-0963">Cytoplasm</keyword>
<keyword id="KW-0227">DNA damage</keyword>
<keyword id="KW-0228">DNA excision</keyword>
<keyword id="KW-0234">DNA repair</keyword>
<keyword id="KW-0267">Excision nuclease</keyword>
<keyword id="KW-0742">SOS response</keyword>
<accession>A4JCS0</accession>
<sequence length="683" mass="74368">MTSPEAADTPFEPKKILAQLPHMPGVYRYYDATGAVLYVGKARDLKKRVSSYFTKTQLSPRIAMMVTRIARIETTVTRSEAEALLLENNLIKALAPRYNILFRDDKSYPYLKLTAHRFPRMAYYRGSVDKQNQYFGPFPSAWAVRESIQILQRVFQLRTCEDSVFNNRTRPCLLHQIGRCTAPCVGAITEDDYAIDVSNAARFLLGRQSEVMNELEQKMHAFAAELKFEQAAAVRNQMSSLATVLHQQAIEVGGDSDVDILAVVAQGGRVCVNLAMVRGGRHLGDKAYFPTHVESALTLAEGGLGDEADGVDDAAAAMPDQPVEGEGDGDGGAAARVAGAGAGASVEAEVLDAFISQHYLGNRVPPVLVVSHAPASRDLLELLSEQAGHKVSLVRQPQGQRRAWLTMAEQNARIALARLLSEQGSQQARTRALAETLGLECDDLATLRIECFDISHTMGEATQASCVVYHHHKMQSGEYRRYNIAGITPGDDYAAMRQVLTRRYEKMVELAAQAAAADAATGIDGESTRQAEASSLLPNIVLIDGGKGQVEIARQVFTELGLDTSMLVGVAKGEGRKVGLETLVFADGRTPLELGKESAALMLVAQIRDEAHRFAITGMRAKRAKARQTSRLEELDGVGAKRRQRLLARFGGLRGVVAASVEELASVDGISHALAEQIYKQLH</sequence>
<protein>
    <recommendedName>
        <fullName evidence="1">UvrABC system protein C</fullName>
        <shortName evidence="1">Protein UvrC</shortName>
    </recommendedName>
    <alternativeName>
        <fullName evidence="1">Excinuclease ABC subunit C</fullName>
    </alternativeName>
</protein>
<organism>
    <name type="scientific">Burkholderia vietnamiensis (strain G4 / LMG 22486)</name>
    <name type="common">Burkholderia cepacia (strain R1808)</name>
    <dbReference type="NCBI Taxonomy" id="269482"/>
    <lineage>
        <taxon>Bacteria</taxon>
        <taxon>Pseudomonadati</taxon>
        <taxon>Pseudomonadota</taxon>
        <taxon>Betaproteobacteria</taxon>
        <taxon>Burkholderiales</taxon>
        <taxon>Burkholderiaceae</taxon>
        <taxon>Burkholderia</taxon>
        <taxon>Burkholderia cepacia complex</taxon>
    </lineage>
</organism>
<comment type="function">
    <text evidence="1">The UvrABC repair system catalyzes the recognition and processing of DNA lesions. UvrC both incises the 5' and 3' sides of the lesion. The N-terminal half is responsible for the 3' incision and the C-terminal half is responsible for the 5' incision.</text>
</comment>
<comment type="subunit">
    <text evidence="1">Interacts with UvrB in an incision complex.</text>
</comment>
<comment type="subcellular location">
    <subcellularLocation>
        <location evidence="1">Cytoplasm</location>
    </subcellularLocation>
</comment>
<comment type="similarity">
    <text evidence="1">Belongs to the UvrC family.</text>
</comment>